<dbReference type="RefSeq" id="WP_018154495.1">
    <property type="nucleotide sequence ID" value="NZ_OX296583.1"/>
</dbReference>
<dbReference type="PDB" id="6ESQ">
    <property type="method" value="X-ray"/>
    <property type="resolution" value="2.95 A"/>
    <property type="chains" value="E/F/G/H=1-130"/>
</dbReference>
<dbReference type="PDB" id="6ET9">
    <property type="method" value="X-ray"/>
    <property type="resolution" value="2.75 A"/>
    <property type="chains" value="E/F/G/H=1-130"/>
</dbReference>
<dbReference type="PDBsum" id="6ESQ"/>
<dbReference type="PDBsum" id="6ET9"/>
<dbReference type="SMR" id="A0A384E139"/>
<dbReference type="GeneID" id="75542297"/>
<dbReference type="BioCyc" id="MetaCyc:MONOMER-21124"/>
<dbReference type="GO" id="GO:0046872">
    <property type="term" value="F:metal ion binding"/>
    <property type="evidence" value="ECO:0007669"/>
    <property type="project" value="UniProtKB-KW"/>
</dbReference>
<dbReference type="Gene3D" id="6.10.30.10">
    <property type="match status" value="1"/>
</dbReference>
<dbReference type="InterPro" id="IPR002878">
    <property type="entry name" value="ChsH2_C"/>
</dbReference>
<dbReference type="InterPro" id="IPR022002">
    <property type="entry name" value="ChsH2_Znr"/>
</dbReference>
<dbReference type="InterPro" id="IPR012340">
    <property type="entry name" value="NA-bd_OB-fold"/>
</dbReference>
<dbReference type="InterPro" id="IPR052513">
    <property type="entry name" value="Thioester_dehydratase-like"/>
</dbReference>
<dbReference type="PANTHER" id="PTHR34075">
    <property type="entry name" value="BLR3430 PROTEIN"/>
    <property type="match status" value="1"/>
</dbReference>
<dbReference type="PANTHER" id="PTHR34075:SF5">
    <property type="entry name" value="BLR3430 PROTEIN"/>
    <property type="match status" value="1"/>
</dbReference>
<dbReference type="Pfam" id="PF01796">
    <property type="entry name" value="OB_ChsH2_C"/>
    <property type="match status" value="1"/>
</dbReference>
<dbReference type="Pfam" id="PF12172">
    <property type="entry name" value="zf-ChsH2"/>
    <property type="match status" value="1"/>
</dbReference>
<dbReference type="SUPFAM" id="SSF50249">
    <property type="entry name" value="Nucleic acid-binding proteins"/>
    <property type="match status" value="1"/>
</dbReference>
<comment type="function">
    <text evidence="1">Functions as a scaffold to connect the acetoacetyl-CoA thiolase and HMG-CoA synthase (HMGCS) dimers in the channeling thiolase/HMGCS complex, which allows for efficient coupling of the endergonic thiolase reaction with the exergonic HMGCS reaction.</text>
</comment>
<comment type="subunit">
    <text evidence="1">Interacts with acetoacetyl-CoA thiolase and HMG-CoA synthase (HMGCS) that catalyzes the first and second step in the mevalonate pathway, respectively.</text>
</comment>
<comment type="similarity">
    <text evidence="2">Belongs to the scaffold protein DUF35 family.</text>
</comment>
<accession>A0A384E139</accession>
<reference evidence="4 5" key="1">
    <citation type="journal article" date="2018" name="Proc. Natl. Acad. Sci. U.S.A.">
        <title>Archaeal acetoacetyl-CoA thiolase/HMG-CoA synthase complex channels the intermediate via a fused CoA-binding site.</title>
        <authorList>
            <person name="Vogeli B."/>
            <person name="Engilberge S."/>
            <person name="Girard E."/>
            <person name="Riobe F."/>
            <person name="Maury O."/>
            <person name="Erb T.J."/>
            <person name="Shima S."/>
            <person name="Wagner T."/>
        </authorList>
    </citation>
    <scope>X-RAY CRYSTALLOGRAPHY (2.95 ANGSTROMS) IN COMPLEX WITH ZN(2+); ACETOACETYL-COA THIOLASE AND HMG-COA SYNTHASE</scope>
    <scope>FUNCTION</scope>
</reference>
<keyword id="KW-0002">3D-structure</keyword>
<keyword id="KW-0479">Metal-binding</keyword>
<keyword id="KW-0862">Zinc</keyword>
<proteinExistence type="evidence at protein level"/>
<feature type="chain" id="PRO_0000461306" description="DUF35 domain-containing scaffold protein">
    <location>
        <begin position="1"/>
        <end position="130"/>
    </location>
</feature>
<feature type="binding site" evidence="1 4 5">
    <location>
        <position position="20"/>
    </location>
    <ligand>
        <name>Zn(2+)</name>
        <dbReference type="ChEBI" id="CHEBI:29105"/>
    </ligand>
</feature>
<feature type="binding site" evidence="1 4 5">
    <location>
        <position position="23"/>
    </location>
    <ligand>
        <name>Zn(2+)</name>
        <dbReference type="ChEBI" id="CHEBI:29105"/>
    </ligand>
</feature>
<feature type="binding site" evidence="1 4 5">
    <location>
        <position position="34"/>
    </location>
    <ligand>
        <name>Zn(2+)</name>
        <dbReference type="ChEBI" id="CHEBI:29105"/>
    </ligand>
</feature>
<feature type="binding site" evidence="1 4 5">
    <location>
        <position position="37"/>
    </location>
    <ligand>
        <name>Zn(2+)</name>
        <dbReference type="ChEBI" id="CHEBI:29105"/>
    </ligand>
</feature>
<feature type="helix" evidence="6">
    <location>
        <begin position="3"/>
        <end position="7"/>
    </location>
</feature>
<feature type="helix" evidence="6">
    <location>
        <begin position="9"/>
        <end position="14"/>
    </location>
</feature>
<feature type="strand" evidence="6">
    <location>
        <begin position="16"/>
        <end position="20"/>
    </location>
</feature>
<feature type="turn" evidence="6">
    <location>
        <begin position="21"/>
        <end position="23"/>
    </location>
</feature>
<feature type="strand" evidence="6">
    <location>
        <begin position="26"/>
        <end position="29"/>
    </location>
</feature>
<feature type="strand" evidence="6">
    <location>
        <begin position="32"/>
        <end position="34"/>
    </location>
</feature>
<feature type="turn" evidence="6">
    <location>
        <begin position="35"/>
        <end position="37"/>
    </location>
</feature>
<feature type="strand" evidence="6">
    <location>
        <begin position="43"/>
        <end position="47"/>
    </location>
</feature>
<feature type="strand" evidence="6">
    <location>
        <begin position="50"/>
        <end position="62"/>
    </location>
</feature>
<feature type="helix" evidence="6">
    <location>
        <begin position="65"/>
        <end position="69"/>
    </location>
</feature>
<feature type="strand" evidence="6">
    <location>
        <begin position="72"/>
        <end position="80"/>
    </location>
</feature>
<feature type="strand" evidence="6">
    <location>
        <begin position="85"/>
        <end position="90"/>
    </location>
</feature>
<feature type="helix" evidence="6">
    <location>
        <begin position="94"/>
        <end position="96"/>
    </location>
</feature>
<feature type="strand" evidence="6">
    <location>
        <begin position="102"/>
        <end position="112"/>
    </location>
</feature>
<feature type="turn" evidence="6">
    <location>
        <begin position="114"/>
        <end position="116"/>
    </location>
</feature>
<feature type="strand" evidence="6">
    <location>
        <begin position="119"/>
        <end position="127"/>
    </location>
</feature>
<protein>
    <recommendedName>
        <fullName evidence="2">DUF35 domain-containing scaffold protein</fullName>
    </recommendedName>
</protein>
<name>SCAF_METTL</name>
<sequence>MVVRSWRHMKERYNLIGTRCKTCGKVYFPSRTVCPDCRRKGELEEFQLSGKGKIYTYSIVYAPPKEFNKLTPYVIAIVELEEGPKVTAQVDCDINKISIGIPVEAAFRRIKEDGKDGIISYGYKFVPITE</sequence>
<evidence type="ECO:0000269" key="1">
    <source>
    </source>
</evidence>
<evidence type="ECO:0000305" key="2"/>
<evidence type="ECO:0000312" key="3">
    <source>
        <dbReference type="PDB" id="6ESQ"/>
    </source>
</evidence>
<evidence type="ECO:0007744" key="4">
    <source>
        <dbReference type="PDB" id="6ESQ"/>
    </source>
</evidence>
<evidence type="ECO:0007744" key="5">
    <source>
        <dbReference type="PDB" id="6ET9"/>
    </source>
</evidence>
<evidence type="ECO:0007829" key="6">
    <source>
        <dbReference type="PDB" id="6ET9"/>
    </source>
</evidence>
<organism evidence="3">
    <name type="scientific">Methanothermococcus thermolithotrophicus</name>
    <name type="common">Methanococcus thermolithotrophicus</name>
    <dbReference type="NCBI Taxonomy" id="2186"/>
    <lineage>
        <taxon>Archaea</taxon>
        <taxon>Methanobacteriati</taxon>
        <taxon>Methanobacteriota</taxon>
        <taxon>Methanomada group</taxon>
        <taxon>Methanococci</taxon>
        <taxon>Methanococcales</taxon>
        <taxon>Methanococcaceae</taxon>
        <taxon>Methanothermococcus</taxon>
    </lineage>
</organism>